<accession>O80475</accession>
<sequence>MYENGISFIISLLICGCVKSEEMMKQHFVLVHGSCLGAWCWYKVKPLLEASGHRVTALDLAACGIDTRSITDISTCEQYSEPLIQLMTSLPNDEKVVLVGHSYGGLTLAIAMDKFPDKISVSVFVTSFMPDTKNSPSFVLEKFASTMTPEDWMGSELEPYVVFSAEFTKHRILQLSPIEDLELRLLLKRPGSLFLNDLSRMKNFSEKGYGSVPRAYIVSKDDHTISEEYQRWMIDNYPPNLVIEMEGTDHLPLFCKPQLLSDHLLAIADKFS</sequence>
<gene>
    <name evidence="3" type="primary">MES8</name>
    <name evidence="5" type="ordered locus">At2g23590</name>
    <name evidence="6" type="ORF">F26B6.24</name>
</gene>
<comment type="function">
    <text evidence="2">Methylesterase shown to have carboxylesterase activity in vitro.</text>
</comment>
<comment type="similarity">
    <text evidence="4">Belongs to the AB hydrolase superfamily. Methylesterase family.</text>
</comment>
<proteinExistence type="inferred from homology"/>
<organism>
    <name type="scientific">Arabidopsis thaliana</name>
    <name type="common">Mouse-ear cress</name>
    <dbReference type="NCBI Taxonomy" id="3702"/>
    <lineage>
        <taxon>Eukaryota</taxon>
        <taxon>Viridiplantae</taxon>
        <taxon>Streptophyta</taxon>
        <taxon>Embryophyta</taxon>
        <taxon>Tracheophyta</taxon>
        <taxon>Spermatophyta</taxon>
        <taxon>Magnoliopsida</taxon>
        <taxon>eudicotyledons</taxon>
        <taxon>Gunneridae</taxon>
        <taxon>Pentapetalae</taxon>
        <taxon>rosids</taxon>
        <taxon>malvids</taxon>
        <taxon>Brassicales</taxon>
        <taxon>Brassicaceae</taxon>
        <taxon>Camelineae</taxon>
        <taxon>Arabidopsis</taxon>
    </lineage>
</organism>
<keyword id="KW-0378">Hydrolase</keyword>
<keyword id="KW-1185">Reference proteome</keyword>
<feature type="chain" id="PRO_0000418182" description="Methylesterase 8">
    <location>
        <begin position="1"/>
        <end position="272"/>
    </location>
</feature>
<feature type="active site" description="Acyl-ester intermediate" evidence="1">
    <location>
        <position position="102"/>
    </location>
</feature>
<feature type="active site" description="Charge relay system" evidence="1">
    <location>
        <position position="222"/>
    </location>
</feature>
<feature type="active site" description="Charge relay system" evidence="1">
    <location>
        <position position="250"/>
    </location>
</feature>
<evidence type="ECO:0000250" key="1">
    <source>
        <dbReference type="UniProtKB" id="Q6RYA0"/>
    </source>
</evidence>
<evidence type="ECO:0000269" key="2">
    <source>
    </source>
</evidence>
<evidence type="ECO:0000303" key="3">
    <source>
    </source>
</evidence>
<evidence type="ECO:0000305" key="4"/>
<evidence type="ECO:0000312" key="5">
    <source>
        <dbReference type="Araport" id="AT2G23590"/>
    </source>
</evidence>
<evidence type="ECO:0000312" key="6">
    <source>
        <dbReference type="EMBL" id="AAC23772.1"/>
    </source>
</evidence>
<reference key="1">
    <citation type="journal article" date="1999" name="Nature">
        <title>Sequence and analysis of chromosome 2 of the plant Arabidopsis thaliana.</title>
        <authorList>
            <person name="Lin X."/>
            <person name="Kaul S."/>
            <person name="Rounsley S.D."/>
            <person name="Shea T.P."/>
            <person name="Benito M.-I."/>
            <person name="Town C.D."/>
            <person name="Fujii C.Y."/>
            <person name="Mason T.M."/>
            <person name="Bowman C.L."/>
            <person name="Barnstead M.E."/>
            <person name="Feldblyum T.V."/>
            <person name="Buell C.R."/>
            <person name="Ketchum K.A."/>
            <person name="Lee J.J."/>
            <person name="Ronning C.M."/>
            <person name="Koo H.L."/>
            <person name="Moffat K.S."/>
            <person name="Cronin L.A."/>
            <person name="Shen M."/>
            <person name="Pai G."/>
            <person name="Van Aken S."/>
            <person name="Umayam L."/>
            <person name="Tallon L.J."/>
            <person name="Gill J.E."/>
            <person name="Adams M.D."/>
            <person name="Carrera A.J."/>
            <person name="Creasy T.H."/>
            <person name="Goodman H.M."/>
            <person name="Somerville C.R."/>
            <person name="Copenhaver G.P."/>
            <person name="Preuss D."/>
            <person name="Nierman W.C."/>
            <person name="White O."/>
            <person name="Eisen J.A."/>
            <person name="Salzberg S.L."/>
            <person name="Fraser C.M."/>
            <person name="Venter J.C."/>
        </authorList>
    </citation>
    <scope>NUCLEOTIDE SEQUENCE [LARGE SCALE GENOMIC DNA]</scope>
    <source>
        <strain>cv. Columbia</strain>
    </source>
</reference>
<reference key="2">
    <citation type="journal article" date="2017" name="Plant J.">
        <title>Araport11: a complete reannotation of the Arabidopsis thaliana reference genome.</title>
        <authorList>
            <person name="Cheng C.Y."/>
            <person name="Krishnakumar V."/>
            <person name="Chan A.P."/>
            <person name="Thibaud-Nissen F."/>
            <person name="Schobel S."/>
            <person name="Town C.D."/>
        </authorList>
    </citation>
    <scope>GENOME REANNOTATION</scope>
    <source>
        <strain>cv. Columbia</strain>
    </source>
</reference>
<reference key="3">
    <citation type="journal article" date="2008" name="Plant Physiol.">
        <title>Inactive methyl indole-3-acetic acid ester can be hydrolyzed and activated by several esterases belonging to the AtMES esterase family of Arabidopsis.</title>
        <authorList>
            <person name="Yang Y."/>
            <person name="Xu R."/>
            <person name="Ma C.J."/>
            <person name="Vlot A.C."/>
            <person name="Klessig D.F."/>
            <person name="Pichersky E."/>
        </authorList>
    </citation>
    <scope>GENE FAMILY</scope>
    <scope>FUNCTION</scope>
</reference>
<dbReference type="EC" id="3.1.1.-" evidence="2"/>
<dbReference type="EMBL" id="AC003040">
    <property type="protein sequence ID" value="AAC23772.1"/>
    <property type="molecule type" value="Genomic_DNA"/>
</dbReference>
<dbReference type="EMBL" id="CP002685">
    <property type="protein sequence ID" value="AEC07470.1"/>
    <property type="molecule type" value="Genomic_DNA"/>
</dbReference>
<dbReference type="PIR" id="T01148">
    <property type="entry name" value="T01148"/>
</dbReference>
<dbReference type="RefSeq" id="NP_179940.1">
    <property type="nucleotide sequence ID" value="NM_127923.2"/>
</dbReference>
<dbReference type="SMR" id="O80475"/>
<dbReference type="STRING" id="3702.O80475"/>
<dbReference type="ESTHER" id="arath-MES8">
    <property type="family name" value="Hydroxynitrile_lyase"/>
</dbReference>
<dbReference type="PaxDb" id="3702-AT2G23590.1"/>
<dbReference type="ProteomicsDB" id="238962"/>
<dbReference type="EnsemblPlants" id="AT2G23590.1">
    <property type="protein sequence ID" value="AT2G23590.1"/>
    <property type="gene ID" value="AT2G23590"/>
</dbReference>
<dbReference type="GeneID" id="816891"/>
<dbReference type="Gramene" id="AT2G23590.1">
    <property type="protein sequence ID" value="AT2G23590.1"/>
    <property type="gene ID" value="AT2G23590"/>
</dbReference>
<dbReference type="KEGG" id="ath:AT2G23590"/>
<dbReference type="Araport" id="AT2G23590"/>
<dbReference type="TAIR" id="AT2G23590">
    <property type="gene designation" value="MES8"/>
</dbReference>
<dbReference type="eggNOG" id="ENOG502QR2J">
    <property type="taxonomic scope" value="Eukaryota"/>
</dbReference>
<dbReference type="HOGENOM" id="CLU_046066_0_1_1"/>
<dbReference type="InParanoid" id="O80475"/>
<dbReference type="OMA" id="LPRISNC"/>
<dbReference type="PhylomeDB" id="O80475"/>
<dbReference type="BioCyc" id="ARA:AT2G23590-MONOMER"/>
<dbReference type="PRO" id="PR:O80475"/>
<dbReference type="Proteomes" id="UP000006548">
    <property type="component" value="Chromosome 2"/>
</dbReference>
<dbReference type="ExpressionAtlas" id="O80475">
    <property type="expression patterns" value="baseline and differential"/>
</dbReference>
<dbReference type="GO" id="GO:0016788">
    <property type="term" value="F:hydrolase activity, acting on ester bonds"/>
    <property type="evidence" value="ECO:0000314"/>
    <property type="project" value="TAIR"/>
</dbReference>
<dbReference type="FunFam" id="3.40.50.1820:FF:000051">
    <property type="entry name" value="(S)-hydroxynitrile lyase"/>
    <property type="match status" value="1"/>
</dbReference>
<dbReference type="Gene3D" id="3.40.50.1820">
    <property type="entry name" value="alpha/beta hydrolase"/>
    <property type="match status" value="1"/>
</dbReference>
<dbReference type="InterPro" id="IPR000073">
    <property type="entry name" value="AB_hydrolase_1"/>
</dbReference>
<dbReference type="InterPro" id="IPR029058">
    <property type="entry name" value="AB_hydrolase_fold"/>
</dbReference>
<dbReference type="InterPro" id="IPR045889">
    <property type="entry name" value="MES/HNL"/>
</dbReference>
<dbReference type="PANTHER" id="PTHR10992:SF1081">
    <property type="entry name" value="METHYLESTERASE 2-RELATED"/>
    <property type="match status" value="1"/>
</dbReference>
<dbReference type="PANTHER" id="PTHR10992">
    <property type="entry name" value="METHYLESTERASE FAMILY MEMBER"/>
    <property type="match status" value="1"/>
</dbReference>
<dbReference type="Pfam" id="PF12697">
    <property type="entry name" value="Abhydrolase_6"/>
    <property type="match status" value="1"/>
</dbReference>
<dbReference type="SUPFAM" id="SSF53474">
    <property type="entry name" value="alpha/beta-Hydrolases"/>
    <property type="match status" value="1"/>
</dbReference>
<protein>
    <recommendedName>
        <fullName evidence="3">Methylesterase 8</fullName>
        <shortName evidence="3">AtMES8</shortName>
        <ecNumber evidence="2">3.1.1.-</ecNumber>
    </recommendedName>
</protein>
<name>MES8_ARATH</name>